<comment type="function">
    <text evidence="1">Catalyzes the reversible interconversion of serine and glycine with tetrahydrofolate (THF) serving as the one-carbon carrier. This reaction serves as the major source of one-carbon groups required for the biosynthesis of purines, thymidylate, methionine, and other important biomolecules. Also exhibits THF-independent aldolase activity toward beta-hydroxyamino acids, producing glycine and aldehydes, via a retro-aldol mechanism.</text>
</comment>
<comment type="catalytic activity">
    <reaction evidence="1">
        <text>(6R)-5,10-methylene-5,6,7,8-tetrahydrofolate + glycine + H2O = (6S)-5,6,7,8-tetrahydrofolate + L-serine</text>
        <dbReference type="Rhea" id="RHEA:15481"/>
        <dbReference type="ChEBI" id="CHEBI:15377"/>
        <dbReference type="ChEBI" id="CHEBI:15636"/>
        <dbReference type="ChEBI" id="CHEBI:33384"/>
        <dbReference type="ChEBI" id="CHEBI:57305"/>
        <dbReference type="ChEBI" id="CHEBI:57453"/>
        <dbReference type="EC" id="2.1.2.1"/>
    </reaction>
</comment>
<comment type="cofactor">
    <cofactor evidence="1">
        <name>pyridoxal 5'-phosphate</name>
        <dbReference type="ChEBI" id="CHEBI:597326"/>
    </cofactor>
</comment>
<comment type="pathway">
    <text evidence="1">One-carbon metabolism; tetrahydrofolate interconversion.</text>
</comment>
<comment type="pathway">
    <text evidence="1">Amino-acid biosynthesis; glycine biosynthesis; glycine from L-serine: step 1/1.</text>
</comment>
<comment type="subunit">
    <text evidence="1">Homodimer.</text>
</comment>
<comment type="subcellular location">
    <subcellularLocation>
        <location evidence="1">Cytoplasm</location>
    </subcellularLocation>
</comment>
<comment type="similarity">
    <text evidence="1">Belongs to the SHMT family.</text>
</comment>
<organism>
    <name type="scientific">Ruegeria sp. (strain TM1040)</name>
    <name type="common">Silicibacter sp.</name>
    <dbReference type="NCBI Taxonomy" id="292414"/>
    <lineage>
        <taxon>Bacteria</taxon>
        <taxon>Pseudomonadati</taxon>
        <taxon>Pseudomonadota</taxon>
        <taxon>Alphaproteobacteria</taxon>
        <taxon>Rhodobacterales</taxon>
        <taxon>Roseobacteraceae</taxon>
        <taxon>Ruegeria</taxon>
    </lineage>
</organism>
<proteinExistence type="inferred from homology"/>
<keyword id="KW-0028">Amino-acid biosynthesis</keyword>
<keyword id="KW-0963">Cytoplasm</keyword>
<keyword id="KW-0554">One-carbon metabolism</keyword>
<keyword id="KW-0663">Pyridoxal phosphate</keyword>
<keyword id="KW-1185">Reference proteome</keyword>
<keyword id="KW-0808">Transferase</keyword>
<sequence>MTDATRDPGFFTQSLSERDPELFGAITDELGRQRDEIELIASENIVSAAVMEAQGSVLTNKYAEGYPGRRYYGGCQYVDVAENLAIDRAKQLFNCEFANVQPNSGSQANQGVFQAILKPGDTILGMDLASGGHLTHGAAPNQSGKWFNAVHYGVRESDCLIDYDQVQALATEHQPKLIIAGGSAIPRQIDFAKFREIADSVGAYLLVDMAHFAGLVAAGEHPSPFPHADVATTTTHKTLRGPRGGMILTNNPDLAKKFNSAIFPGIQGGPLMHVIAGKAAAFGEALKPEFKSYQKQVRANAVALADELIKGGLDIVTGGTDTHVMLVDLRPKGVTGNIVDKALGRAHITTNKNGIPFDPEKPTVTSGIRLGTPAGTTRGFGEEEFREIARLIVEVVDGLAANGEDGNAAVEEAVRGKVAALCGRFPLYPNL</sequence>
<accession>Q1GGA4</accession>
<gene>
    <name evidence="1" type="primary">glyA</name>
    <name type="ordered locus">TM1040_1579</name>
</gene>
<dbReference type="EC" id="2.1.2.1" evidence="1"/>
<dbReference type="EMBL" id="CP000377">
    <property type="protein sequence ID" value="ABF64312.1"/>
    <property type="molecule type" value="Genomic_DNA"/>
</dbReference>
<dbReference type="RefSeq" id="WP_011538912.1">
    <property type="nucleotide sequence ID" value="NC_008044.1"/>
</dbReference>
<dbReference type="SMR" id="Q1GGA4"/>
<dbReference type="STRING" id="292414.TM1040_1579"/>
<dbReference type="KEGG" id="sit:TM1040_1579"/>
<dbReference type="eggNOG" id="COG0112">
    <property type="taxonomic scope" value="Bacteria"/>
</dbReference>
<dbReference type="HOGENOM" id="CLU_022477_2_0_5"/>
<dbReference type="OrthoDB" id="9803846at2"/>
<dbReference type="UniPathway" id="UPA00193"/>
<dbReference type="UniPathway" id="UPA00288">
    <property type="reaction ID" value="UER01023"/>
</dbReference>
<dbReference type="Proteomes" id="UP000000636">
    <property type="component" value="Chromosome"/>
</dbReference>
<dbReference type="GO" id="GO:0005829">
    <property type="term" value="C:cytosol"/>
    <property type="evidence" value="ECO:0007669"/>
    <property type="project" value="TreeGrafter"/>
</dbReference>
<dbReference type="GO" id="GO:0004372">
    <property type="term" value="F:glycine hydroxymethyltransferase activity"/>
    <property type="evidence" value="ECO:0007669"/>
    <property type="project" value="UniProtKB-UniRule"/>
</dbReference>
<dbReference type="GO" id="GO:0030170">
    <property type="term" value="F:pyridoxal phosphate binding"/>
    <property type="evidence" value="ECO:0007669"/>
    <property type="project" value="UniProtKB-UniRule"/>
</dbReference>
<dbReference type="GO" id="GO:0019264">
    <property type="term" value="P:glycine biosynthetic process from serine"/>
    <property type="evidence" value="ECO:0007669"/>
    <property type="project" value="UniProtKB-UniRule"/>
</dbReference>
<dbReference type="GO" id="GO:0035999">
    <property type="term" value="P:tetrahydrofolate interconversion"/>
    <property type="evidence" value="ECO:0007669"/>
    <property type="project" value="UniProtKB-UniRule"/>
</dbReference>
<dbReference type="CDD" id="cd00378">
    <property type="entry name" value="SHMT"/>
    <property type="match status" value="1"/>
</dbReference>
<dbReference type="FunFam" id="3.40.640.10:FF:000001">
    <property type="entry name" value="Serine hydroxymethyltransferase"/>
    <property type="match status" value="1"/>
</dbReference>
<dbReference type="Gene3D" id="3.90.1150.10">
    <property type="entry name" value="Aspartate Aminotransferase, domain 1"/>
    <property type="match status" value="1"/>
</dbReference>
<dbReference type="Gene3D" id="3.40.640.10">
    <property type="entry name" value="Type I PLP-dependent aspartate aminotransferase-like (Major domain)"/>
    <property type="match status" value="1"/>
</dbReference>
<dbReference type="HAMAP" id="MF_00051">
    <property type="entry name" value="SHMT"/>
    <property type="match status" value="1"/>
</dbReference>
<dbReference type="InterPro" id="IPR015424">
    <property type="entry name" value="PyrdxlP-dep_Trfase"/>
</dbReference>
<dbReference type="InterPro" id="IPR015421">
    <property type="entry name" value="PyrdxlP-dep_Trfase_major"/>
</dbReference>
<dbReference type="InterPro" id="IPR015422">
    <property type="entry name" value="PyrdxlP-dep_Trfase_small"/>
</dbReference>
<dbReference type="InterPro" id="IPR001085">
    <property type="entry name" value="Ser_HO-MeTrfase"/>
</dbReference>
<dbReference type="InterPro" id="IPR049943">
    <property type="entry name" value="Ser_HO-MeTrfase-like"/>
</dbReference>
<dbReference type="InterPro" id="IPR019798">
    <property type="entry name" value="Ser_HO-MeTrfase_PLP_BS"/>
</dbReference>
<dbReference type="InterPro" id="IPR039429">
    <property type="entry name" value="SHMT-like_dom"/>
</dbReference>
<dbReference type="NCBIfam" id="NF000586">
    <property type="entry name" value="PRK00011.1"/>
    <property type="match status" value="1"/>
</dbReference>
<dbReference type="PANTHER" id="PTHR11680">
    <property type="entry name" value="SERINE HYDROXYMETHYLTRANSFERASE"/>
    <property type="match status" value="1"/>
</dbReference>
<dbReference type="PANTHER" id="PTHR11680:SF35">
    <property type="entry name" value="SERINE HYDROXYMETHYLTRANSFERASE 1"/>
    <property type="match status" value="1"/>
</dbReference>
<dbReference type="Pfam" id="PF00464">
    <property type="entry name" value="SHMT"/>
    <property type="match status" value="1"/>
</dbReference>
<dbReference type="PIRSF" id="PIRSF000412">
    <property type="entry name" value="SHMT"/>
    <property type="match status" value="1"/>
</dbReference>
<dbReference type="SUPFAM" id="SSF53383">
    <property type="entry name" value="PLP-dependent transferases"/>
    <property type="match status" value="1"/>
</dbReference>
<dbReference type="PROSITE" id="PS00096">
    <property type="entry name" value="SHMT"/>
    <property type="match status" value="1"/>
</dbReference>
<protein>
    <recommendedName>
        <fullName evidence="1">Serine hydroxymethyltransferase</fullName>
        <shortName evidence="1">SHMT</shortName>
        <shortName evidence="1">Serine methylase</shortName>
        <ecNumber evidence="1">2.1.2.1</ecNumber>
    </recommendedName>
</protein>
<feature type="chain" id="PRO_1000006324" description="Serine hydroxymethyltransferase">
    <location>
        <begin position="1"/>
        <end position="431"/>
    </location>
</feature>
<feature type="binding site" evidence="1">
    <location>
        <position position="128"/>
    </location>
    <ligand>
        <name>(6S)-5,6,7,8-tetrahydrofolate</name>
        <dbReference type="ChEBI" id="CHEBI:57453"/>
    </ligand>
</feature>
<feature type="binding site" evidence="1">
    <location>
        <begin position="132"/>
        <end position="134"/>
    </location>
    <ligand>
        <name>(6S)-5,6,7,8-tetrahydrofolate</name>
        <dbReference type="ChEBI" id="CHEBI:57453"/>
    </ligand>
</feature>
<feature type="site" description="Plays an important role in substrate specificity" evidence="1">
    <location>
        <position position="236"/>
    </location>
</feature>
<feature type="modified residue" description="N6-(pyridoxal phosphate)lysine" evidence="1">
    <location>
        <position position="237"/>
    </location>
</feature>
<name>GLYA_RUEST</name>
<evidence type="ECO:0000255" key="1">
    <source>
        <dbReference type="HAMAP-Rule" id="MF_00051"/>
    </source>
</evidence>
<reference key="1">
    <citation type="submission" date="2006-05" db="EMBL/GenBank/DDBJ databases">
        <title>Complete sequence of chromosome of Silicibacter sp. TM1040.</title>
        <authorList>
            <consortium name="US DOE Joint Genome Institute"/>
            <person name="Copeland A."/>
            <person name="Lucas S."/>
            <person name="Lapidus A."/>
            <person name="Barry K."/>
            <person name="Detter J.C."/>
            <person name="Glavina del Rio T."/>
            <person name="Hammon N."/>
            <person name="Israni S."/>
            <person name="Dalin E."/>
            <person name="Tice H."/>
            <person name="Pitluck S."/>
            <person name="Brettin T."/>
            <person name="Bruce D."/>
            <person name="Han C."/>
            <person name="Tapia R."/>
            <person name="Goodwin L."/>
            <person name="Thompson L.S."/>
            <person name="Gilna P."/>
            <person name="Schmutz J."/>
            <person name="Larimer F."/>
            <person name="Land M."/>
            <person name="Hauser L."/>
            <person name="Kyrpides N."/>
            <person name="Kim E."/>
            <person name="Belas R."/>
            <person name="Moran M.A."/>
            <person name="Buchan A."/>
            <person name="Gonzalez J.M."/>
            <person name="Schell M.A."/>
            <person name="Sun F."/>
            <person name="Richardson P."/>
        </authorList>
    </citation>
    <scope>NUCLEOTIDE SEQUENCE [LARGE SCALE GENOMIC DNA]</scope>
    <source>
        <strain>TM1040</strain>
    </source>
</reference>